<dbReference type="EMBL" id="AE017143">
    <property type="protein sequence ID" value="AAP95510.1"/>
    <property type="status" value="ALT_SEQ"/>
    <property type="molecule type" value="Genomic_DNA"/>
</dbReference>
<dbReference type="RefSeq" id="WP_102029660.1">
    <property type="nucleotide sequence ID" value="NC_002940.2"/>
</dbReference>
<dbReference type="SMR" id="Q7VNG1"/>
<dbReference type="STRING" id="233412.HD_0575"/>
<dbReference type="KEGG" id="hdu:HD_0575"/>
<dbReference type="eggNOG" id="COG1186">
    <property type="taxonomic scope" value="Bacteria"/>
</dbReference>
<dbReference type="HOGENOM" id="CLU_036856_6_0_6"/>
<dbReference type="OrthoDB" id="9806673at2"/>
<dbReference type="Proteomes" id="UP000001022">
    <property type="component" value="Chromosome"/>
</dbReference>
<dbReference type="GO" id="GO:0005737">
    <property type="term" value="C:cytoplasm"/>
    <property type="evidence" value="ECO:0007669"/>
    <property type="project" value="UniProtKB-SubCell"/>
</dbReference>
<dbReference type="GO" id="GO:0016149">
    <property type="term" value="F:translation release factor activity, codon specific"/>
    <property type="evidence" value="ECO:0007669"/>
    <property type="project" value="UniProtKB-UniRule"/>
</dbReference>
<dbReference type="GO" id="GO:0075523">
    <property type="term" value="P:viral translational frameshifting"/>
    <property type="evidence" value="ECO:0007669"/>
    <property type="project" value="UniProtKB-KW"/>
</dbReference>
<dbReference type="FunFam" id="3.30.160.20:FF:000010">
    <property type="entry name" value="Peptide chain release factor 2"/>
    <property type="match status" value="1"/>
</dbReference>
<dbReference type="Gene3D" id="3.30.160.20">
    <property type="match status" value="1"/>
</dbReference>
<dbReference type="Gene3D" id="3.30.70.1660">
    <property type="match status" value="1"/>
</dbReference>
<dbReference type="Gene3D" id="1.20.58.410">
    <property type="entry name" value="Release factor"/>
    <property type="match status" value="1"/>
</dbReference>
<dbReference type="HAMAP" id="MF_00094">
    <property type="entry name" value="Rel_fac_2"/>
    <property type="match status" value="1"/>
</dbReference>
<dbReference type="InterPro" id="IPR005139">
    <property type="entry name" value="PCRF"/>
</dbReference>
<dbReference type="InterPro" id="IPR000352">
    <property type="entry name" value="Pep_chain_release_fac_I"/>
</dbReference>
<dbReference type="InterPro" id="IPR045853">
    <property type="entry name" value="Pep_chain_release_fac_I_sf"/>
</dbReference>
<dbReference type="InterPro" id="IPR004374">
    <property type="entry name" value="PrfB"/>
</dbReference>
<dbReference type="NCBIfam" id="TIGR00020">
    <property type="entry name" value="prfB"/>
    <property type="match status" value="1"/>
</dbReference>
<dbReference type="PANTHER" id="PTHR43116:SF3">
    <property type="entry name" value="CLASS I PEPTIDE CHAIN RELEASE FACTOR"/>
    <property type="match status" value="1"/>
</dbReference>
<dbReference type="PANTHER" id="PTHR43116">
    <property type="entry name" value="PEPTIDE CHAIN RELEASE FACTOR 2"/>
    <property type="match status" value="1"/>
</dbReference>
<dbReference type="Pfam" id="PF03462">
    <property type="entry name" value="PCRF"/>
    <property type="match status" value="1"/>
</dbReference>
<dbReference type="Pfam" id="PF00472">
    <property type="entry name" value="RF-1"/>
    <property type="match status" value="1"/>
</dbReference>
<dbReference type="SMART" id="SM00937">
    <property type="entry name" value="PCRF"/>
    <property type="match status" value="1"/>
</dbReference>
<dbReference type="SUPFAM" id="SSF75620">
    <property type="entry name" value="Release factor"/>
    <property type="match status" value="1"/>
</dbReference>
<dbReference type="PROSITE" id="PS00745">
    <property type="entry name" value="RF_PROK_I"/>
    <property type="match status" value="1"/>
</dbReference>
<organism>
    <name type="scientific">Haemophilus ducreyi (strain 35000HP / ATCC 700724)</name>
    <dbReference type="NCBI Taxonomy" id="233412"/>
    <lineage>
        <taxon>Bacteria</taxon>
        <taxon>Pseudomonadati</taxon>
        <taxon>Pseudomonadota</taxon>
        <taxon>Gammaproteobacteria</taxon>
        <taxon>Pasteurellales</taxon>
        <taxon>Pasteurellaceae</taxon>
        <taxon>Haemophilus</taxon>
    </lineage>
</organism>
<feature type="chain" id="PRO_0000166819" description="Peptide chain release factor 2">
    <location>
        <begin position="1"/>
        <end position="365"/>
    </location>
</feature>
<feature type="modified residue" description="N5-methylglutamine" evidence="2">
    <location>
        <position position="252"/>
    </location>
</feature>
<keyword id="KW-0963">Cytoplasm</keyword>
<keyword id="KW-0488">Methylation</keyword>
<keyword id="KW-0648">Protein biosynthesis</keyword>
<keyword id="KW-1185">Reference proteome</keyword>
<keyword id="KW-0688">Ribosomal frameshifting</keyword>
<name>RF2_HAEDU</name>
<protein>
    <recommendedName>
        <fullName evidence="2">Peptide chain release factor 2</fullName>
        <shortName evidence="2">RF-2</shortName>
    </recommendedName>
</protein>
<proteinExistence type="inferred from homology"/>
<sequence>MFELNPIRTQLADLTERTQLIRGYLDFDTKVERLEEVNAELEQPEIWNTPEKAQTLGKERSTLEMVVNTINALIQGIEDVEALIELAVEAEDEQTLYEAQIEADELATKLAKLEFQRMFSGPYDATDCYLDLQAGSGGTEAQDWTEMLLRMYLRWAESKGFKTELIEVSDGDVAGLKSATIRITGEYAFGWLRTETGIHRLVRKSPFDSNNRRHTSFAAAFVYPEVDDDVDIEINPADLRIDVYRASGAGGQHVNKTESAVRITHMPSGIVVQCQNGRSQHQNKDQCMKQLRAKLYEMEMMKKNAEKQAMEENKSDIGWGSQIRSYVLDDSRIKDLRTGVENRNTQAVLDGDLDRFIEASLKAGL</sequence>
<accession>Q7VNG1</accession>
<reference key="1">
    <citation type="submission" date="2003-06" db="EMBL/GenBank/DDBJ databases">
        <title>The complete genome sequence of Haemophilus ducreyi.</title>
        <authorList>
            <person name="Munson R.S. Jr."/>
            <person name="Ray W.C."/>
            <person name="Mahairas G."/>
            <person name="Sabo P."/>
            <person name="Mungur R."/>
            <person name="Johnson L."/>
            <person name="Nguyen D."/>
            <person name="Wang J."/>
            <person name="Forst C."/>
            <person name="Hood L."/>
        </authorList>
    </citation>
    <scope>NUCLEOTIDE SEQUENCE [LARGE SCALE GENOMIC DNA]</scope>
    <source>
        <strain>35000HP / ATCC 700724</strain>
    </source>
</reference>
<gene>
    <name evidence="2" type="primary">prfB</name>
    <name type="ordered locus">HD_0575</name>
</gene>
<evidence type="ECO:0000250" key="1"/>
<evidence type="ECO:0000255" key="2">
    <source>
        <dbReference type="HAMAP-Rule" id="MF_00094"/>
    </source>
</evidence>
<comment type="function">
    <text evidence="2">Peptide chain release factor 2 directs the termination of translation in response to the peptide chain termination codons UGA and UAA.</text>
</comment>
<comment type="subcellular location">
    <subcellularLocation>
        <location evidence="2">Cytoplasm</location>
    </subcellularLocation>
</comment>
<comment type="PTM">
    <text evidence="2">Methylated by PrmC. Methylation increases the termination efficiency of RF2.</text>
</comment>
<comment type="miscellaneous">
    <text evidence="1">The gene for this protein contains a UGA in-frame termination codon after Leu-25; a naturally occurring frameshift enables complete translation of RF-2. This provides a mechanism for the protein to regulate its own production (By similarity).</text>
</comment>
<comment type="similarity">
    <text evidence="2">Belongs to the prokaryotic/mitochondrial release factor family.</text>
</comment>